<sequence>MSASGEISTPRDYIGHHLNHLQLDLRTFELVNPHSTGPATFWTLNIDSLFFSVVLGLAFLLVFRKVAASATSGVPGKLQTAVELIIGFVDNSVRDMYHGKSKVIAPLALTVFVWVLLMNMMDLLPIDLLPYIGEHVFGLPALRVVPTADVSITLSMALGVFILIIFYSIKMKGVGGFTKELTMQPFYHPIFIPVNLILEGVSLLSKPLSLGLRLFGNMYAGELIFILIAGLLPWWSQWMLSVPWAIFHILIITLQAFIFMVLTIVYLSMASEEH</sequence>
<feature type="chain" id="PRO_0000362515" description="ATP synthase subunit a">
    <location>
        <begin position="1"/>
        <end position="274"/>
    </location>
</feature>
<feature type="transmembrane region" description="Helical" evidence="1">
    <location>
        <begin position="43"/>
        <end position="63"/>
    </location>
</feature>
<feature type="transmembrane region" description="Helical" evidence="1">
    <location>
        <begin position="103"/>
        <end position="123"/>
    </location>
</feature>
<feature type="transmembrane region" description="Helical" evidence="1">
    <location>
        <begin position="149"/>
        <end position="169"/>
    </location>
</feature>
<feature type="transmembrane region" description="Helical" evidence="1">
    <location>
        <begin position="223"/>
        <end position="243"/>
    </location>
</feature>
<feature type="transmembrane region" description="Helical" evidence="1">
    <location>
        <begin position="245"/>
        <end position="265"/>
    </location>
</feature>
<name>ATP6_YERPG</name>
<comment type="function">
    <text evidence="1">Key component of the proton channel; it plays a direct role in the translocation of protons across the membrane.</text>
</comment>
<comment type="subunit">
    <text evidence="1">F-type ATPases have 2 components, CF(1) - the catalytic core - and CF(0) - the membrane proton channel. CF(1) has five subunits: alpha(3), beta(3), gamma(1), delta(1), epsilon(1). CF(0) has three main subunits: a(1), b(2) and c(9-12). The alpha and beta chains form an alternating ring which encloses part of the gamma chain. CF(1) is attached to CF(0) by a central stalk formed by the gamma and epsilon chains, while a peripheral stalk is formed by the delta and b chains.</text>
</comment>
<comment type="subcellular location">
    <subcellularLocation>
        <location evidence="1">Cell inner membrane</location>
        <topology evidence="1">Multi-pass membrane protein</topology>
    </subcellularLocation>
</comment>
<comment type="similarity">
    <text evidence="1">Belongs to the ATPase A chain family.</text>
</comment>
<comment type="sequence caution" evidence="2">
    <conflict type="erroneous initiation">
        <sequence resource="EMBL-CDS" id="ABX85199"/>
    </conflict>
</comment>
<dbReference type="EMBL" id="CP000901">
    <property type="protein sequence ID" value="ABX85199.1"/>
    <property type="status" value="ALT_INIT"/>
    <property type="molecule type" value="Genomic_DNA"/>
</dbReference>
<dbReference type="RefSeq" id="WP_041854837.1">
    <property type="nucleotide sequence ID" value="NC_010159.1"/>
</dbReference>
<dbReference type="SMR" id="A9R5U5"/>
<dbReference type="KEGG" id="ypg:YpAngola_A4208"/>
<dbReference type="PATRIC" id="fig|349746.12.peg.945"/>
<dbReference type="GO" id="GO:0005886">
    <property type="term" value="C:plasma membrane"/>
    <property type="evidence" value="ECO:0007669"/>
    <property type="project" value="UniProtKB-SubCell"/>
</dbReference>
<dbReference type="GO" id="GO:0045259">
    <property type="term" value="C:proton-transporting ATP synthase complex"/>
    <property type="evidence" value="ECO:0007669"/>
    <property type="project" value="UniProtKB-KW"/>
</dbReference>
<dbReference type="GO" id="GO:0046933">
    <property type="term" value="F:proton-transporting ATP synthase activity, rotational mechanism"/>
    <property type="evidence" value="ECO:0007669"/>
    <property type="project" value="UniProtKB-UniRule"/>
</dbReference>
<dbReference type="GO" id="GO:0042777">
    <property type="term" value="P:proton motive force-driven plasma membrane ATP synthesis"/>
    <property type="evidence" value="ECO:0007669"/>
    <property type="project" value="TreeGrafter"/>
</dbReference>
<dbReference type="CDD" id="cd00310">
    <property type="entry name" value="ATP-synt_Fo_a_6"/>
    <property type="match status" value="1"/>
</dbReference>
<dbReference type="FunFam" id="1.20.120.220:FF:000002">
    <property type="entry name" value="ATP synthase subunit a"/>
    <property type="match status" value="1"/>
</dbReference>
<dbReference type="Gene3D" id="1.20.120.220">
    <property type="entry name" value="ATP synthase, F0 complex, subunit A"/>
    <property type="match status" value="1"/>
</dbReference>
<dbReference type="HAMAP" id="MF_01393">
    <property type="entry name" value="ATP_synth_a_bact"/>
    <property type="match status" value="1"/>
</dbReference>
<dbReference type="InterPro" id="IPR045082">
    <property type="entry name" value="ATP_syn_F0_a_bact/chloroplast"/>
</dbReference>
<dbReference type="InterPro" id="IPR000568">
    <property type="entry name" value="ATP_synth_F0_asu"/>
</dbReference>
<dbReference type="InterPro" id="IPR023011">
    <property type="entry name" value="ATP_synth_F0_asu_AS"/>
</dbReference>
<dbReference type="InterPro" id="IPR035908">
    <property type="entry name" value="F0_ATP_A_sf"/>
</dbReference>
<dbReference type="NCBIfam" id="TIGR01131">
    <property type="entry name" value="ATP_synt_6_or_A"/>
    <property type="match status" value="1"/>
</dbReference>
<dbReference type="NCBIfam" id="NF004477">
    <property type="entry name" value="PRK05815.1-1"/>
    <property type="match status" value="1"/>
</dbReference>
<dbReference type="PANTHER" id="PTHR42823">
    <property type="entry name" value="ATP SYNTHASE SUBUNIT A, CHLOROPLASTIC"/>
    <property type="match status" value="1"/>
</dbReference>
<dbReference type="PANTHER" id="PTHR42823:SF3">
    <property type="entry name" value="ATP SYNTHASE SUBUNIT A, CHLOROPLASTIC"/>
    <property type="match status" value="1"/>
</dbReference>
<dbReference type="Pfam" id="PF00119">
    <property type="entry name" value="ATP-synt_A"/>
    <property type="match status" value="1"/>
</dbReference>
<dbReference type="PRINTS" id="PR00123">
    <property type="entry name" value="ATPASEA"/>
</dbReference>
<dbReference type="SUPFAM" id="SSF81336">
    <property type="entry name" value="F1F0 ATP synthase subunit A"/>
    <property type="match status" value="1"/>
</dbReference>
<dbReference type="PROSITE" id="PS00449">
    <property type="entry name" value="ATPASE_A"/>
    <property type="match status" value="1"/>
</dbReference>
<protein>
    <recommendedName>
        <fullName evidence="1">ATP synthase subunit a</fullName>
    </recommendedName>
    <alternativeName>
        <fullName evidence="1">ATP synthase F0 sector subunit a</fullName>
    </alternativeName>
    <alternativeName>
        <fullName evidence="1">F-ATPase subunit 6</fullName>
    </alternativeName>
</protein>
<keyword id="KW-0066">ATP synthesis</keyword>
<keyword id="KW-0997">Cell inner membrane</keyword>
<keyword id="KW-1003">Cell membrane</keyword>
<keyword id="KW-0138">CF(0)</keyword>
<keyword id="KW-0375">Hydrogen ion transport</keyword>
<keyword id="KW-0406">Ion transport</keyword>
<keyword id="KW-0472">Membrane</keyword>
<keyword id="KW-0812">Transmembrane</keyword>
<keyword id="KW-1133">Transmembrane helix</keyword>
<keyword id="KW-0813">Transport</keyword>
<accession>A9R5U5</accession>
<proteinExistence type="inferred from homology"/>
<organism>
    <name type="scientific">Yersinia pestis bv. Antiqua (strain Angola)</name>
    <dbReference type="NCBI Taxonomy" id="349746"/>
    <lineage>
        <taxon>Bacteria</taxon>
        <taxon>Pseudomonadati</taxon>
        <taxon>Pseudomonadota</taxon>
        <taxon>Gammaproteobacteria</taxon>
        <taxon>Enterobacterales</taxon>
        <taxon>Yersiniaceae</taxon>
        <taxon>Yersinia</taxon>
    </lineage>
</organism>
<gene>
    <name evidence="1" type="primary">atpB</name>
    <name type="ordered locus">YpAngola_A4208</name>
</gene>
<evidence type="ECO:0000255" key="1">
    <source>
        <dbReference type="HAMAP-Rule" id="MF_01393"/>
    </source>
</evidence>
<evidence type="ECO:0000305" key="2"/>
<reference key="1">
    <citation type="journal article" date="2010" name="J. Bacteriol.">
        <title>Genome sequence of the deep-rooted Yersinia pestis strain Angola reveals new insights into the evolution and pangenome of the plague bacterium.</title>
        <authorList>
            <person name="Eppinger M."/>
            <person name="Worsham P.L."/>
            <person name="Nikolich M.P."/>
            <person name="Riley D.R."/>
            <person name="Sebastian Y."/>
            <person name="Mou S."/>
            <person name="Achtman M."/>
            <person name="Lindler L.E."/>
            <person name="Ravel J."/>
        </authorList>
    </citation>
    <scope>NUCLEOTIDE SEQUENCE [LARGE SCALE GENOMIC DNA]</scope>
    <source>
        <strain>Angola</strain>
    </source>
</reference>